<comment type="function">
    <text>Required for 27S rRNA processing to 25S and 5.8S.</text>
</comment>
<comment type="interaction">
    <interactant intactId="EBI-16002">
        <id>P35178</id>
    </interactant>
    <interactant intactId="EBI-29259">
        <id>P39744</id>
        <label>NOC2</label>
    </interactant>
    <organismsDiffer>false</organismsDiffer>
    <experiments>4</experiments>
</comment>
<comment type="subcellular location">
    <subcellularLocation>
        <location>Nucleus</location>
        <location>Nucleolus</location>
    </subcellularLocation>
</comment>
<comment type="miscellaneous">
    <text evidence="2">Present with 6960 molecules/cell in log phase SD medium.</text>
</comment>
<comment type="similarity">
    <text evidence="3">Belongs to the RRP1 family.</text>
</comment>
<proteinExistence type="evidence at protein level"/>
<keyword id="KW-0002">3D-structure</keyword>
<keyword id="KW-0007">Acetylation</keyword>
<keyword id="KW-0175">Coiled coil</keyword>
<keyword id="KW-0539">Nucleus</keyword>
<keyword id="KW-0597">Phosphoprotein</keyword>
<keyword id="KW-1185">Reference proteome</keyword>
<keyword id="KW-0698">rRNA processing</keyword>
<feature type="chain" id="PRO_0000097452" description="Ribosomal RNA-processing protein 1">
    <location>
        <begin position="1"/>
        <end position="278"/>
    </location>
</feature>
<feature type="region of interest" description="Disordered" evidence="1">
    <location>
        <begin position="255"/>
        <end position="278"/>
    </location>
</feature>
<feature type="compositionally biased region" description="Acidic residues" evidence="1">
    <location>
        <begin position="265"/>
        <end position="278"/>
    </location>
</feature>
<feature type="modified residue" description="N-acetylmethionine" evidence="6">
    <location>
        <position position="1"/>
    </location>
</feature>
<feature type="modified residue" description="Phosphoserine" evidence="4 5">
    <location>
        <position position="267"/>
    </location>
</feature>
<feature type="turn" evidence="7">
    <location>
        <begin position="7"/>
        <end position="9"/>
    </location>
</feature>
<feature type="helix" evidence="7">
    <location>
        <begin position="15"/>
        <end position="30"/>
    </location>
</feature>
<feature type="helix" evidence="7">
    <location>
        <begin position="39"/>
        <end position="54"/>
    </location>
</feature>
<feature type="helix" evidence="7">
    <location>
        <begin position="59"/>
        <end position="75"/>
    </location>
</feature>
<feature type="helix" evidence="7">
    <location>
        <begin position="79"/>
        <end position="81"/>
    </location>
</feature>
<feature type="strand" evidence="7">
    <location>
        <begin position="90"/>
        <end position="92"/>
    </location>
</feature>
<feature type="helix" evidence="7">
    <location>
        <begin position="95"/>
        <end position="109"/>
    </location>
</feature>
<feature type="strand" evidence="7">
    <location>
        <begin position="110"/>
        <end position="112"/>
    </location>
</feature>
<feature type="turn" evidence="7">
    <location>
        <begin position="115"/>
        <end position="117"/>
    </location>
</feature>
<feature type="helix" evidence="7">
    <location>
        <begin position="118"/>
        <end position="134"/>
    </location>
</feature>
<feature type="strand" evidence="7">
    <location>
        <begin position="138"/>
        <end position="140"/>
    </location>
</feature>
<feature type="helix" evidence="7">
    <location>
        <begin position="143"/>
        <end position="154"/>
    </location>
</feature>
<feature type="turn" evidence="7">
    <location>
        <begin position="155"/>
        <end position="158"/>
    </location>
</feature>
<feature type="helix" evidence="7">
    <location>
        <begin position="168"/>
        <end position="176"/>
    </location>
</feature>
<feature type="turn" evidence="7">
    <location>
        <begin position="177"/>
        <end position="183"/>
    </location>
</feature>
<feature type="helix" evidence="7">
    <location>
        <begin position="214"/>
        <end position="226"/>
    </location>
</feature>
<feature type="helix" evidence="7">
    <location>
        <begin position="232"/>
        <end position="241"/>
    </location>
</feature>
<feature type="turn" evidence="7">
    <location>
        <begin position="242"/>
        <end position="244"/>
    </location>
</feature>
<accession>P35178</accession>
<accession>D6VS74</accession>
<protein>
    <recommendedName>
        <fullName>Ribosomal RNA-processing protein 1</fullName>
    </recommendedName>
</protein>
<name>RRP1_YEAST</name>
<sequence length="278" mass="33203">METSNFVKQLSSNNRKTRVNALEALKKYLTAKQFKENKQIEFNKLWKGLYYAMWFSDRPRPQQRLANELGELHGLYFDPKDNSTADELTTNDKAFIKFSRGFWKVMCFEWFNIDRYRLDKYLLLIRRVLFSQLKYLQSRNWDKKLVDEYIKKVLRWLPLSGSPKVYTGIPIHIVDILLDEWERLLKDGDEDDEDEENKEEEMRKIAESAKKTPLADVIAIFQDIVADYNNSKVLREKIKEDLFSDTRLVSWDILEGETQHNDSSNESEEEEEEEWKGF</sequence>
<gene>
    <name type="primary">RRP1</name>
    <name type="ordered locus">YDR087C</name>
    <name type="ORF">D4478</name>
</gene>
<evidence type="ECO:0000256" key="1">
    <source>
        <dbReference type="SAM" id="MobiDB-lite"/>
    </source>
</evidence>
<evidence type="ECO:0000269" key="2">
    <source>
    </source>
</evidence>
<evidence type="ECO:0000305" key="3"/>
<evidence type="ECO:0007744" key="4">
    <source>
    </source>
</evidence>
<evidence type="ECO:0007744" key="5">
    <source>
    </source>
</evidence>
<evidence type="ECO:0007744" key="6">
    <source>
    </source>
</evidence>
<evidence type="ECO:0007829" key="7">
    <source>
        <dbReference type="PDB" id="6EM3"/>
    </source>
</evidence>
<reference key="1">
    <citation type="journal article" date="1997" name="Nature">
        <title>The nucleotide sequence of Saccharomyces cerevisiae chromosome IV.</title>
        <authorList>
            <person name="Jacq C."/>
            <person name="Alt-Moerbe J."/>
            <person name="Andre B."/>
            <person name="Arnold W."/>
            <person name="Bahr A."/>
            <person name="Ballesta J.P.G."/>
            <person name="Bargues M."/>
            <person name="Baron L."/>
            <person name="Becker A."/>
            <person name="Biteau N."/>
            <person name="Bloecker H."/>
            <person name="Blugeon C."/>
            <person name="Boskovic J."/>
            <person name="Brandt P."/>
            <person name="Brueckner M."/>
            <person name="Buitrago M.J."/>
            <person name="Coster F."/>
            <person name="Delaveau T."/>
            <person name="del Rey F."/>
            <person name="Dujon B."/>
            <person name="Eide L.G."/>
            <person name="Garcia-Cantalejo J.M."/>
            <person name="Goffeau A."/>
            <person name="Gomez-Peris A."/>
            <person name="Granotier C."/>
            <person name="Hanemann V."/>
            <person name="Hankeln T."/>
            <person name="Hoheisel J.D."/>
            <person name="Jaeger W."/>
            <person name="Jimenez A."/>
            <person name="Jonniaux J.-L."/>
            <person name="Kraemer C."/>
            <person name="Kuester H."/>
            <person name="Laamanen P."/>
            <person name="Legros Y."/>
            <person name="Louis E.J."/>
            <person name="Moeller-Rieker S."/>
            <person name="Monnet A."/>
            <person name="Moro M."/>
            <person name="Mueller-Auer S."/>
            <person name="Nussbaumer B."/>
            <person name="Paricio N."/>
            <person name="Paulin L."/>
            <person name="Perea J."/>
            <person name="Perez-Alonso M."/>
            <person name="Perez-Ortin J.E."/>
            <person name="Pohl T.M."/>
            <person name="Prydz H."/>
            <person name="Purnelle B."/>
            <person name="Rasmussen S.W."/>
            <person name="Remacha M.A."/>
            <person name="Revuelta J.L."/>
            <person name="Rieger M."/>
            <person name="Salom D."/>
            <person name="Saluz H.P."/>
            <person name="Saiz J.E."/>
            <person name="Saren A.-M."/>
            <person name="Schaefer M."/>
            <person name="Scharfe M."/>
            <person name="Schmidt E.R."/>
            <person name="Schneider C."/>
            <person name="Scholler P."/>
            <person name="Schwarz S."/>
            <person name="Soler-Mira A."/>
            <person name="Urrestarazu L.A."/>
            <person name="Verhasselt P."/>
            <person name="Vissers S."/>
            <person name="Voet M."/>
            <person name="Volckaert G."/>
            <person name="Wagner G."/>
            <person name="Wambutt R."/>
            <person name="Wedler E."/>
            <person name="Wedler H."/>
            <person name="Woelfl S."/>
            <person name="Harris D.E."/>
            <person name="Bowman S."/>
            <person name="Brown D."/>
            <person name="Churcher C.M."/>
            <person name="Connor R."/>
            <person name="Dedman K."/>
            <person name="Gentles S."/>
            <person name="Hamlin N."/>
            <person name="Hunt S."/>
            <person name="Jones L."/>
            <person name="McDonald S."/>
            <person name="Murphy L.D."/>
            <person name="Niblett D."/>
            <person name="Odell C."/>
            <person name="Oliver K."/>
            <person name="Rajandream M.A."/>
            <person name="Richards C."/>
            <person name="Shore L."/>
            <person name="Walsh S.V."/>
            <person name="Barrell B.G."/>
            <person name="Dietrich F.S."/>
            <person name="Mulligan J.T."/>
            <person name="Allen E."/>
            <person name="Araujo R."/>
            <person name="Aviles E."/>
            <person name="Berno A."/>
            <person name="Carpenter J."/>
            <person name="Chen E."/>
            <person name="Cherry J.M."/>
            <person name="Chung E."/>
            <person name="Duncan M."/>
            <person name="Hunicke-Smith S."/>
            <person name="Hyman R.W."/>
            <person name="Komp C."/>
            <person name="Lashkari D."/>
            <person name="Lew H."/>
            <person name="Lin D."/>
            <person name="Mosedale D."/>
            <person name="Nakahara K."/>
            <person name="Namath A."/>
            <person name="Oefner P."/>
            <person name="Oh C."/>
            <person name="Petel F.X."/>
            <person name="Roberts D."/>
            <person name="Schramm S."/>
            <person name="Schroeder M."/>
            <person name="Shogren T."/>
            <person name="Shroff N."/>
            <person name="Winant A."/>
            <person name="Yelton M.A."/>
            <person name="Botstein D."/>
            <person name="Davis R.W."/>
            <person name="Johnston M."/>
            <person name="Andrews S."/>
            <person name="Brinkman R."/>
            <person name="Cooper J."/>
            <person name="Ding H."/>
            <person name="Du Z."/>
            <person name="Favello A."/>
            <person name="Fulton L."/>
            <person name="Gattung S."/>
            <person name="Greco T."/>
            <person name="Hallsworth K."/>
            <person name="Hawkins J."/>
            <person name="Hillier L.W."/>
            <person name="Jier M."/>
            <person name="Johnson D."/>
            <person name="Johnston L."/>
            <person name="Kirsten J."/>
            <person name="Kucaba T."/>
            <person name="Langston Y."/>
            <person name="Latreille P."/>
            <person name="Le T."/>
            <person name="Mardis E."/>
            <person name="Menezes S."/>
            <person name="Miller N."/>
            <person name="Nhan M."/>
            <person name="Pauley A."/>
            <person name="Peluso D."/>
            <person name="Rifkin L."/>
            <person name="Riles L."/>
            <person name="Taich A."/>
            <person name="Trevaskis E."/>
            <person name="Vignati D."/>
            <person name="Wilcox L."/>
            <person name="Wohldman P."/>
            <person name="Vaudin M."/>
            <person name="Wilson R."/>
            <person name="Waterston R."/>
            <person name="Albermann K."/>
            <person name="Hani J."/>
            <person name="Heumann K."/>
            <person name="Kleine K."/>
            <person name="Mewes H.-W."/>
            <person name="Zollner A."/>
            <person name="Zaccaria P."/>
        </authorList>
    </citation>
    <scope>NUCLEOTIDE SEQUENCE [LARGE SCALE GENOMIC DNA]</scope>
    <source>
        <strain>ATCC 204508 / S288c</strain>
    </source>
</reference>
<reference key="2">
    <citation type="journal article" date="2014" name="G3 (Bethesda)">
        <title>The reference genome sequence of Saccharomyces cerevisiae: Then and now.</title>
        <authorList>
            <person name="Engel S.R."/>
            <person name="Dietrich F.S."/>
            <person name="Fisk D.G."/>
            <person name="Binkley G."/>
            <person name="Balakrishnan R."/>
            <person name="Costanzo M.C."/>
            <person name="Dwight S.S."/>
            <person name="Hitz B.C."/>
            <person name="Karra K."/>
            <person name="Nash R.S."/>
            <person name="Weng S."/>
            <person name="Wong E.D."/>
            <person name="Lloyd P."/>
            <person name="Skrzypek M.S."/>
            <person name="Miyasato S.R."/>
            <person name="Simison M."/>
            <person name="Cherry J.M."/>
        </authorList>
    </citation>
    <scope>GENOME REANNOTATION</scope>
    <source>
        <strain>ATCC 204508 / S288c</strain>
    </source>
</reference>
<reference key="3">
    <citation type="journal article" date="1993" name="EMBO J.">
        <title>The yeast SSS1 gene is essential for secretory protein translocation and encodes a conserved protein of the endoplasmic reticulum.</title>
        <authorList>
            <person name="Esnault Y."/>
            <person name="Blondel M.-O."/>
            <person name="Deshaies R.J."/>
            <person name="Schekman R."/>
            <person name="Kepes F."/>
        </authorList>
    </citation>
    <scope>NUCLEOTIDE SEQUENCE [GENOMIC DNA] OF 146-278</scope>
</reference>
<reference key="4">
    <citation type="journal article" date="1999" name="J. Cell Sci.">
        <title>The nucleolar antigen Nop52, the human homologue of the yeast ribosomal RNA processing RRP1, is recruited at late stages of nucleologenesis.</title>
        <authorList>
            <person name="Savino T.M."/>
            <person name="Bastos R."/>
            <person name="Jansen E."/>
            <person name="Hernandez-Verdun D."/>
        </authorList>
    </citation>
    <scope>CHARACTERIZATION</scope>
</reference>
<reference key="5">
    <citation type="journal article" date="2003" name="Nature">
        <title>Global analysis of protein expression in yeast.</title>
        <authorList>
            <person name="Ghaemmaghami S."/>
            <person name="Huh W.-K."/>
            <person name="Bower K."/>
            <person name="Howson R.W."/>
            <person name="Belle A."/>
            <person name="Dephoure N."/>
            <person name="O'Shea E.K."/>
            <person name="Weissman J.S."/>
        </authorList>
    </citation>
    <scope>LEVEL OF PROTEIN EXPRESSION [LARGE SCALE ANALYSIS]</scope>
</reference>
<reference key="6">
    <citation type="journal article" date="2007" name="J. Proteome Res.">
        <title>Large-scale phosphorylation analysis of alpha-factor-arrested Saccharomyces cerevisiae.</title>
        <authorList>
            <person name="Li X."/>
            <person name="Gerber S.A."/>
            <person name="Rudner A.D."/>
            <person name="Beausoleil S.A."/>
            <person name="Haas W."/>
            <person name="Villen J."/>
            <person name="Elias J.E."/>
            <person name="Gygi S.P."/>
        </authorList>
    </citation>
    <scope>PHOSPHORYLATION [LARGE SCALE ANALYSIS] AT SER-267</scope>
    <scope>IDENTIFICATION BY MASS SPECTROMETRY [LARGE SCALE ANALYSIS]</scope>
    <source>
        <strain>ADR376</strain>
    </source>
</reference>
<reference key="7">
    <citation type="journal article" date="2009" name="Science">
        <title>Global analysis of Cdk1 substrate phosphorylation sites provides insights into evolution.</title>
        <authorList>
            <person name="Holt L.J."/>
            <person name="Tuch B.B."/>
            <person name="Villen J."/>
            <person name="Johnson A.D."/>
            <person name="Gygi S.P."/>
            <person name="Morgan D.O."/>
        </authorList>
    </citation>
    <scope>PHOSPHORYLATION [LARGE SCALE ANALYSIS] AT SER-267</scope>
    <scope>IDENTIFICATION BY MASS SPECTROMETRY [LARGE SCALE ANALYSIS]</scope>
</reference>
<reference key="8">
    <citation type="journal article" date="2012" name="Proc. Natl. Acad. Sci. U.S.A.">
        <title>N-terminal acetylome analyses and functional insights of the N-terminal acetyltransferase NatB.</title>
        <authorList>
            <person name="Van Damme P."/>
            <person name="Lasa M."/>
            <person name="Polevoda B."/>
            <person name="Gazquez C."/>
            <person name="Elosegui-Artola A."/>
            <person name="Kim D.S."/>
            <person name="De Juan-Pardo E."/>
            <person name="Demeyer K."/>
            <person name="Hole K."/>
            <person name="Larrea E."/>
            <person name="Timmerman E."/>
            <person name="Prieto J."/>
            <person name="Arnesen T."/>
            <person name="Sherman F."/>
            <person name="Gevaert K."/>
            <person name="Aldabe R."/>
        </authorList>
    </citation>
    <scope>ACETYLATION [LARGE SCALE ANALYSIS] AT MET-1</scope>
    <scope>IDENTIFICATION BY MASS SPECTROMETRY [LARGE SCALE ANALYSIS]</scope>
</reference>
<organism>
    <name type="scientific">Saccharomyces cerevisiae (strain ATCC 204508 / S288c)</name>
    <name type="common">Baker's yeast</name>
    <dbReference type="NCBI Taxonomy" id="559292"/>
    <lineage>
        <taxon>Eukaryota</taxon>
        <taxon>Fungi</taxon>
        <taxon>Dikarya</taxon>
        <taxon>Ascomycota</taxon>
        <taxon>Saccharomycotina</taxon>
        <taxon>Saccharomycetes</taxon>
        <taxon>Saccharomycetales</taxon>
        <taxon>Saccharomycetaceae</taxon>
        <taxon>Saccharomyces</taxon>
    </lineage>
</organism>
<dbReference type="EMBL" id="Z46796">
    <property type="protein sequence ID" value="CAA86809.1"/>
    <property type="molecule type" value="Genomic_DNA"/>
</dbReference>
<dbReference type="EMBL" id="Z74383">
    <property type="protein sequence ID" value="CAA98907.1"/>
    <property type="molecule type" value="Genomic_DNA"/>
</dbReference>
<dbReference type="EMBL" id="X82086">
    <property type="protein sequence ID" value="CAA57616.1"/>
    <property type="molecule type" value="Genomic_DNA"/>
</dbReference>
<dbReference type="EMBL" id="X74499">
    <property type="protein sequence ID" value="CAA52607.1"/>
    <property type="molecule type" value="Genomic_DNA"/>
</dbReference>
<dbReference type="EMBL" id="BK006938">
    <property type="protein sequence ID" value="DAA11934.1"/>
    <property type="molecule type" value="Genomic_DNA"/>
</dbReference>
<dbReference type="PIR" id="S48776">
    <property type="entry name" value="S48776"/>
</dbReference>
<dbReference type="RefSeq" id="NP_010372.3">
    <property type="nucleotide sequence ID" value="NM_001180395.3"/>
</dbReference>
<dbReference type="PDB" id="5Z3G">
    <property type="method" value="EM"/>
    <property type="resolution" value="3.65 A"/>
    <property type="chains" value="X=1-278"/>
</dbReference>
<dbReference type="PDB" id="6C0F">
    <property type="method" value="EM"/>
    <property type="resolution" value="3.70 A"/>
    <property type="chains" value="z=1-278"/>
</dbReference>
<dbReference type="PDB" id="6CB1">
    <property type="method" value="EM"/>
    <property type="resolution" value="4.60 A"/>
    <property type="chains" value="z=1-278"/>
</dbReference>
<dbReference type="PDB" id="6EM1">
    <property type="method" value="EM"/>
    <property type="resolution" value="3.60 A"/>
    <property type="chains" value="4=1-278"/>
</dbReference>
<dbReference type="PDB" id="6EM3">
    <property type="method" value="EM"/>
    <property type="resolution" value="3.20 A"/>
    <property type="chains" value="4=1-278"/>
</dbReference>
<dbReference type="PDB" id="6EM4">
    <property type="method" value="EM"/>
    <property type="resolution" value="4.10 A"/>
    <property type="chains" value="4=1-278"/>
</dbReference>
<dbReference type="PDB" id="6EM5">
    <property type="method" value="EM"/>
    <property type="resolution" value="4.30 A"/>
    <property type="chains" value="4=1-278"/>
</dbReference>
<dbReference type="PDB" id="7OHS">
    <property type="method" value="EM"/>
    <property type="resolution" value="4.38 A"/>
    <property type="chains" value="4=1-278"/>
</dbReference>
<dbReference type="PDB" id="7OHW">
    <property type="method" value="EM"/>
    <property type="resolution" value="3.50 A"/>
    <property type="chains" value="4=1-278"/>
</dbReference>
<dbReference type="PDB" id="7OHX">
    <property type="method" value="EM"/>
    <property type="resolution" value="3.30 A"/>
    <property type="chains" value="4=1-278"/>
</dbReference>
<dbReference type="PDB" id="8E5T">
    <property type="method" value="EM"/>
    <property type="resolution" value="4.00 A"/>
    <property type="chains" value="z=1-278"/>
</dbReference>
<dbReference type="PDB" id="8V83">
    <property type="method" value="EM"/>
    <property type="resolution" value="2.53 A"/>
    <property type="chains" value="w=1-278"/>
</dbReference>
<dbReference type="PDB" id="8V84">
    <property type="method" value="EM"/>
    <property type="resolution" value="2.70 A"/>
    <property type="chains" value="w=1-278"/>
</dbReference>
<dbReference type="PDBsum" id="5Z3G"/>
<dbReference type="PDBsum" id="6C0F"/>
<dbReference type="PDBsum" id="6CB1"/>
<dbReference type="PDBsum" id="6EM1"/>
<dbReference type="PDBsum" id="6EM3"/>
<dbReference type="PDBsum" id="6EM4"/>
<dbReference type="PDBsum" id="6EM5"/>
<dbReference type="PDBsum" id="7OHS"/>
<dbReference type="PDBsum" id="7OHW"/>
<dbReference type="PDBsum" id="7OHX"/>
<dbReference type="PDBsum" id="8E5T"/>
<dbReference type="PDBsum" id="8V83"/>
<dbReference type="PDBsum" id="8V84"/>
<dbReference type="EMDB" id="EMD-12907"/>
<dbReference type="EMDB" id="EMD-12911"/>
<dbReference type="EMDB" id="EMD-12912"/>
<dbReference type="EMDB" id="EMD-27919"/>
<dbReference type="EMDB" id="EMD-43017"/>
<dbReference type="EMDB" id="EMD-43021"/>
<dbReference type="EMDB" id="EMD-6878"/>
<dbReference type="EMDB" id="EMD-7324"/>
<dbReference type="EMDB" id="EMD-7445"/>
<dbReference type="SMR" id="P35178"/>
<dbReference type="BioGRID" id="32143">
    <property type="interactions" value="498"/>
</dbReference>
<dbReference type="DIP" id="DIP-4622N"/>
<dbReference type="FunCoup" id="P35178">
    <property type="interactions" value="521"/>
</dbReference>
<dbReference type="IntAct" id="P35178">
    <property type="interactions" value="67"/>
</dbReference>
<dbReference type="MINT" id="P35178"/>
<dbReference type="STRING" id="4932.YDR087C"/>
<dbReference type="iPTMnet" id="P35178"/>
<dbReference type="PaxDb" id="4932-YDR087C"/>
<dbReference type="PeptideAtlas" id="P35178"/>
<dbReference type="EnsemblFungi" id="YDR087C_mRNA">
    <property type="protein sequence ID" value="YDR087C"/>
    <property type="gene ID" value="YDR087C"/>
</dbReference>
<dbReference type="GeneID" id="851660"/>
<dbReference type="KEGG" id="sce:YDR087C"/>
<dbReference type="AGR" id="SGD:S000002494"/>
<dbReference type="SGD" id="S000002494">
    <property type="gene designation" value="RRP1"/>
</dbReference>
<dbReference type="VEuPathDB" id="FungiDB:YDR087C"/>
<dbReference type="eggNOG" id="KOG3911">
    <property type="taxonomic scope" value="Eukaryota"/>
</dbReference>
<dbReference type="GeneTree" id="ENSGT00390000011821"/>
<dbReference type="HOGENOM" id="CLU_022876_0_2_1"/>
<dbReference type="InParanoid" id="P35178"/>
<dbReference type="OMA" id="AMWFSDR"/>
<dbReference type="OrthoDB" id="2019504at2759"/>
<dbReference type="BioCyc" id="YEAST:G3O-29692-MONOMER"/>
<dbReference type="BioGRID-ORCS" id="851660">
    <property type="hits" value="0 hits in 10 CRISPR screens"/>
</dbReference>
<dbReference type="CD-CODE" id="BDAE0F88">
    <property type="entry name" value="Nucleolus"/>
</dbReference>
<dbReference type="PRO" id="PR:P35178"/>
<dbReference type="Proteomes" id="UP000002311">
    <property type="component" value="Chromosome IV"/>
</dbReference>
<dbReference type="RNAct" id="P35178">
    <property type="molecule type" value="protein"/>
</dbReference>
<dbReference type="GO" id="GO:0005730">
    <property type="term" value="C:nucleolus"/>
    <property type="evidence" value="ECO:0007005"/>
    <property type="project" value="SGD"/>
</dbReference>
<dbReference type="GO" id="GO:0005634">
    <property type="term" value="C:nucleus"/>
    <property type="evidence" value="ECO:0007005"/>
    <property type="project" value="SGD"/>
</dbReference>
<dbReference type="GO" id="GO:0030687">
    <property type="term" value="C:preribosome, large subunit precursor"/>
    <property type="evidence" value="ECO:0000314"/>
    <property type="project" value="SGD"/>
</dbReference>
<dbReference type="GO" id="GO:0030688">
    <property type="term" value="C:preribosome, small subunit precursor"/>
    <property type="evidence" value="ECO:0007669"/>
    <property type="project" value="InterPro"/>
</dbReference>
<dbReference type="GO" id="GO:0006364">
    <property type="term" value="P:rRNA processing"/>
    <property type="evidence" value="ECO:0000315"/>
    <property type="project" value="SGD"/>
</dbReference>
<dbReference type="InterPro" id="IPR010301">
    <property type="entry name" value="RRP1"/>
</dbReference>
<dbReference type="PANTHER" id="PTHR13026">
    <property type="entry name" value="NNP-1 PROTEIN NOVEL NUCLEAR PROTEIN 1 NOP52"/>
    <property type="match status" value="1"/>
</dbReference>
<dbReference type="PANTHER" id="PTHR13026:SF0">
    <property type="entry name" value="RIBOSOMAL RNA PROCESSING 1B"/>
    <property type="match status" value="1"/>
</dbReference>
<dbReference type="Pfam" id="PF05997">
    <property type="entry name" value="Nop52"/>
    <property type="match status" value="1"/>
</dbReference>